<comment type="function">
    <text evidence="2">Together with DpaA, catalyzes the conversion of dihydrodipicolinate to dipicolinate (DPA), which constitutes up to 10% of the dry weight of the spore.</text>
</comment>
<comment type="catalytic activity">
    <reaction>
        <text>(S)-2,3-dihydrodipicolinate + NADP(+) = dipicolinate + NADPH + H(+)</text>
        <dbReference type="Rhea" id="RHEA:47092"/>
        <dbReference type="ChEBI" id="CHEBI:15378"/>
        <dbReference type="ChEBI" id="CHEBI:30620"/>
        <dbReference type="ChEBI" id="CHEBI:36167"/>
        <dbReference type="ChEBI" id="CHEBI:57783"/>
        <dbReference type="ChEBI" id="CHEBI:58349"/>
    </reaction>
</comment>
<comment type="subunit">
    <text evidence="2">Dipicolinate synthase likely consists of DpaA and DpaB, since both proteins are required for DPA synthesis.</text>
</comment>
<comment type="induction">
    <text evidence="1 2">Is not expressed during vegetative growth; is expressed at stage 5 of sporulation specifically in the mother cell compartment, under the control of the sigma-K factor. Is repressed by GerE.</text>
</comment>
<comment type="disruption phenotype">
    <text evidence="1 2">Disruption of this gene has no effect on vegetative growth but causes a sporulation defect, characterized by very low sporulation frequencies and heat-sensitive spores devoid of DPA, which can be cured by supplementation with dipicolinate.</text>
</comment>
<reference key="1">
    <citation type="journal article" date="1993" name="J. Biol. Chem.">
        <title>Organization and nucleotide sequence of the Bacillus subtilis diaminopimelate operon, a cluster of genes encoding the first three enzymes of diaminopimelate synthesis and dipicolinate synthase.</title>
        <authorList>
            <person name="Chen N.-Y."/>
            <person name="Jiang S.-Q."/>
            <person name="Klein D.A."/>
            <person name="Paulus H."/>
        </authorList>
    </citation>
    <scope>NUCLEOTIDE SEQUENCE [GENOMIC DNA]</scope>
    <scope>INDUCTION</scope>
    <scope>DISRUPTION PHENOTYPE</scope>
    <source>
        <strain>168</strain>
    </source>
</reference>
<reference key="2">
    <citation type="journal article" date="1993" name="J. Mol. Biol.">
        <title>Cloning, DNA sequence, functional analysis and transcriptional regulation of the genes encoding dipicolinic acid synthetase required for sporulation in Bacillus subtilis.</title>
        <authorList>
            <person name="Daniel R.A."/>
            <person name="Errington J."/>
        </authorList>
    </citation>
    <scope>NUCLEOTIDE SEQUENCE [GENOMIC DNA]</scope>
    <scope>FUNCTION IN DPA SYNTHESIS</scope>
    <scope>GENE NAME</scope>
    <scope>INDUCTION</scope>
    <scope>SUBUNIT</scope>
    <scope>DISRUPTION PHENOTYPE</scope>
    <source>
        <strain>168</strain>
        <strain>SG38</strain>
    </source>
</reference>
<reference key="3">
    <citation type="journal article" date="1997" name="Nature">
        <title>The complete genome sequence of the Gram-positive bacterium Bacillus subtilis.</title>
        <authorList>
            <person name="Kunst F."/>
            <person name="Ogasawara N."/>
            <person name="Moszer I."/>
            <person name="Albertini A.M."/>
            <person name="Alloni G."/>
            <person name="Azevedo V."/>
            <person name="Bertero M.G."/>
            <person name="Bessieres P."/>
            <person name="Bolotin A."/>
            <person name="Borchert S."/>
            <person name="Borriss R."/>
            <person name="Boursier L."/>
            <person name="Brans A."/>
            <person name="Braun M."/>
            <person name="Brignell S.C."/>
            <person name="Bron S."/>
            <person name="Brouillet S."/>
            <person name="Bruschi C.V."/>
            <person name="Caldwell B."/>
            <person name="Capuano V."/>
            <person name="Carter N.M."/>
            <person name="Choi S.-K."/>
            <person name="Codani J.-J."/>
            <person name="Connerton I.F."/>
            <person name="Cummings N.J."/>
            <person name="Daniel R.A."/>
            <person name="Denizot F."/>
            <person name="Devine K.M."/>
            <person name="Duesterhoeft A."/>
            <person name="Ehrlich S.D."/>
            <person name="Emmerson P.T."/>
            <person name="Entian K.-D."/>
            <person name="Errington J."/>
            <person name="Fabret C."/>
            <person name="Ferrari E."/>
            <person name="Foulger D."/>
            <person name="Fritz C."/>
            <person name="Fujita M."/>
            <person name="Fujita Y."/>
            <person name="Fuma S."/>
            <person name="Galizzi A."/>
            <person name="Galleron N."/>
            <person name="Ghim S.-Y."/>
            <person name="Glaser P."/>
            <person name="Goffeau A."/>
            <person name="Golightly E.J."/>
            <person name="Grandi G."/>
            <person name="Guiseppi G."/>
            <person name="Guy B.J."/>
            <person name="Haga K."/>
            <person name="Haiech J."/>
            <person name="Harwood C.R."/>
            <person name="Henaut A."/>
            <person name="Hilbert H."/>
            <person name="Holsappel S."/>
            <person name="Hosono S."/>
            <person name="Hullo M.-F."/>
            <person name="Itaya M."/>
            <person name="Jones L.-M."/>
            <person name="Joris B."/>
            <person name="Karamata D."/>
            <person name="Kasahara Y."/>
            <person name="Klaerr-Blanchard M."/>
            <person name="Klein C."/>
            <person name="Kobayashi Y."/>
            <person name="Koetter P."/>
            <person name="Koningstein G."/>
            <person name="Krogh S."/>
            <person name="Kumano M."/>
            <person name="Kurita K."/>
            <person name="Lapidus A."/>
            <person name="Lardinois S."/>
            <person name="Lauber J."/>
            <person name="Lazarevic V."/>
            <person name="Lee S.-M."/>
            <person name="Levine A."/>
            <person name="Liu H."/>
            <person name="Masuda S."/>
            <person name="Mauel C."/>
            <person name="Medigue C."/>
            <person name="Medina N."/>
            <person name="Mellado R.P."/>
            <person name="Mizuno M."/>
            <person name="Moestl D."/>
            <person name="Nakai S."/>
            <person name="Noback M."/>
            <person name="Noone D."/>
            <person name="O'Reilly M."/>
            <person name="Ogawa K."/>
            <person name="Ogiwara A."/>
            <person name="Oudega B."/>
            <person name="Park S.-H."/>
            <person name="Parro V."/>
            <person name="Pohl T.M."/>
            <person name="Portetelle D."/>
            <person name="Porwollik S."/>
            <person name="Prescott A.M."/>
            <person name="Presecan E."/>
            <person name="Pujic P."/>
            <person name="Purnelle B."/>
            <person name="Rapoport G."/>
            <person name="Rey M."/>
            <person name="Reynolds S."/>
            <person name="Rieger M."/>
            <person name="Rivolta C."/>
            <person name="Rocha E."/>
            <person name="Roche B."/>
            <person name="Rose M."/>
            <person name="Sadaie Y."/>
            <person name="Sato T."/>
            <person name="Scanlan E."/>
            <person name="Schleich S."/>
            <person name="Schroeter R."/>
            <person name="Scoffone F."/>
            <person name="Sekiguchi J."/>
            <person name="Sekowska A."/>
            <person name="Seror S.J."/>
            <person name="Serror P."/>
            <person name="Shin B.-S."/>
            <person name="Soldo B."/>
            <person name="Sorokin A."/>
            <person name="Tacconi E."/>
            <person name="Takagi T."/>
            <person name="Takahashi H."/>
            <person name="Takemaru K."/>
            <person name="Takeuchi M."/>
            <person name="Tamakoshi A."/>
            <person name="Tanaka T."/>
            <person name="Terpstra P."/>
            <person name="Tognoni A."/>
            <person name="Tosato V."/>
            <person name="Uchiyama S."/>
            <person name="Vandenbol M."/>
            <person name="Vannier F."/>
            <person name="Vassarotti A."/>
            <person name="Viari A."/>
            <person name="Wambutt R."/>
            <person name="Wedler E."/>
            <person name="Wedler H."/>
            <person name="Weitzenegger T."/>
            <person name="Winters P."/>
            <person name="Wipat A."/>
            <person name="Yamamoto H."/>
            <person name="Yamane K."/>
            <person name="Yasumoto K."/>
            <person name="Yata K."/>
            <person name="Yoshida K."/>
            <person name="Yoshikawa H.-F."/>
            <person name="Zumstein E."/>
            <person name="Yoshikawa H."/>
            <person name="Danchin A."/>
        </authorList>
    </citation>
    <scope>NUCLEOTIDE SEQUENCE [LARGE SCALE GENOMIC DNA]</scope>
    <source>
        <strain>168</strain>
    </source>
</reference>
<accession>Q04810</accession>
<feature type="chain" id="PRO_0000072084" description="Dipicolinate synthase subunit B">
    <location>
        <begin position="1"/>
        <end position="200"/>
    </location>
</feature>
<dbReference type="EC" id="1.3.1.-"/>
<dbReference type="EMBL" id="L08471">
    <property type="protein sequence ID" value="AAA22382.1"/>
    <property type="molecule type" value="Genomic_DNA"/>
</dbReference>
<dbReference type="EMBL" id="Z22554">
    <property type="protein sequence ID" value="CAA80275.1"/>
    <property type="molecule type" value="Genomic_DNA"/>
</dbReference>
<dbReference type="EMBL" id="AL009126">
    <property type="protein sequence ID" value="CAB13547.1"/>
    <property type="molecule type" value="Genomic_DNA"/>
</dbReference>
<dbReference type="PIR" id="F46665">
    <property type="entry name" value="F46665"/>
</dbReference>
<dbReference type="RefSeq" id="NP_389556.1">
    <property type="nucleotide sequence ID" value="NC_000964.3"/>
</dbReference>
<dbReference type="RefSeq" id="WP_003244650.1">
    <property type="nucleotide sequence ID" value="NZ_OZ025638.1"/>
</dbReference>
<dbReference type="SMR" id="Q04810"/>
<dbReference type="FunCoup" id="Q04810">
    <property type="interactions" value="72"/>
</dbReference>
<dbReference type="STRING" id="224308.BSU16740"/>
<dbReference type="PaxDb" id="224308-BSU16740"/>
<dbReference type="DNASU" id="939660"/>
<dbReference type="EnsemblBacteria" id="CAB13547">
    <property type="protein sequence ID" value="CAB13547"/>
    <property type="gene ID" value="BSU_16740"/>
</dbReference>
<dbReference type="GeneID" id="939660"/>
<dbReference type="KEGG" id="bsu:BSU16740"/>
<dbReference type="PATRIC" id="fig|224308.179.peg.1816"/>
<dbReference type="eggNOG" id="COG0452">
    <property type="taxonomic scope" value="Bacteria"/>
</dbReference>
<dbReference type="InParanoid" id="Q04810"/>
<dbReference type="OrthoDB" id="9792688at2"/>
<dbReference type="PhylomeDB" id="Q04810"/>
<dbReference type="BioCyc" id="BSUB:BSU16740-MONOMER"/>
<dbReference type="BioCyc" id="MetaCyc:MONOMER-6567"/>
<dbReference type="Proteomes" id="UP000001570">
    <property type="component" value="Chromosome"/>
</dbReference>
<dbReference type="GO" id="GO:0016491">
    <property type="term" value="F:oxidoreductase activity"/>
    <property type="evidence" value="ECO:0007669"/>
    <property type="project" value="UniProtKB-KW"/>
</dbReference>
<dbReference type="GO" id="GO:0030435">
    <property type="term" value="P:sporulation resulting in formation of a cellular spore"/>
    <property type="evidence" value="ECO:0007669"/>
    <property type="project" value="UniProtKB-KW"/>
</dbReference>
<dbReference type="Gene3D" id="3.40.50.1950">
    <property type="entry name" value="Flavin prenyltransferase-like"/>
    <property type="match status" value="1"/>
</dbReference>
<dbReference type="InterPro" id="IPR014214">
    <property type="entry name" value="Dipicolinic_acid_synth_B"/>
</dbReference>
<dbReference type="InterPro" id="IPR036551">
    <property type="entry name" value="Flavin_trans-like"/>
</dbReference>
<dbReference type="InterPro" id="IPR003382">
    <property type="entry name" value="Flavoprotein"/>
</dbReference>
<dbReference type="NCBIfam" id="NF006161">
    <property type="entry name" value="PRK08305.1"/>
    <property type="match status" value="1"/>
</dbReference>
<dbReference type="NCBIfam" id="TIGR02852">
    <property type="entry name" value="spore_dpaB"/>
    <property type="match status" value="1"/>
</dbReference>
<dbReference type="Pfam" id="PF02441">
    <property type="entry name" value="Flavoprotein"/>
    <property type="match status" value="1"/>
</dbReference>
<dbReference type="PIRSF" id="PIRSF001390">
    <property type="entry name" value="Dipicolinate_synth_subunit_B"/>
    <property type="match status" value="1"/>
</dbReference>
<dbReference type="SUPFAM" id="SSF52507">
    <property type="entry name" value="Homo-oligomeric flavin-containing Cys decarboxylases, HFCD"/>
    <property type="match status" value="1"/>
</dbReference>
<evidence type="ECO:0000269" key="1">
    <source>
    </source>
</evidence>
<evidence type="ECO:0000269" key="2">
    <source>
    </source>
</evidence>
<sequence>MSSLKGKRIGFGLTGSHCTYEAVFPQIEELVNEGAEVRPVVTFNVKSTNTRFGEGAEWVKKIEDLTGYEAIDSIVKAEPLGPKLPLDCMVIAPLTGNSMSKLANAMTDSPVLMAAKATIRNNRPVVLGISTNDALGLNGTNLMRLMSTKNIFFIPFGQDDPFKKPNSMVAKMDLLPQTIEKALMHQQLQPILVENYQGND</sequence>
<keyword id="KW-0521">NADP</keyword>
<keyword id="KW-0560">Oxidoreductase</keyword>
<keyword id="KW-1185">Reference proteome</keyword>
<keyword id="KW-0749">Sporulation</keyword>
<organism>
    <name type="scientific">Bacillus subtilis (strain 168)</name>
    <dbReference type="NCBI Taxonomy" id="224308"/>
    <lineage>
        <taxon>Bacteria</taxon>
        <taxon>Bacillati</taxon>
        <taxon>Bacillota</taxon>
        <taxon>Bacilli</taxon>
        <taxon>Bacillales</taxon>
        <taxon>Bacillaceae</taxon>
        <taxon>Bacillus</taxon>
    </lineage>
</organism>
<name>DPAB_BACSU</name>
<gene>
    <name type="primary">dpaB</name>
    <name type="synonym">spoVFB</name>
    <name type="ordered locus">BSU16740</name>
    <name type="ORF">orfX</name>
</gene>
<protein>
    <recommendedName>
        <fullName>Dipicolinate synthase subunit B</fullName>
        <shortName>DPA synthase subunit B</shortName>
        <ecNumber>1.3.1.-</ecNumber>
    </recommendedName>
    <alternativeName>
        <fullName>Spore dipicolinate synthase subunit B</fullName>
    </alternativeName>
    <alternativeName>
        <fullName>Stage V sporulation protein FB</fullName>
    </alternativeName>
</protein>
<proteinExistence type="evidence at protein level"/>